<keyword id="KW-1185">Reference proteome</keyword>
<keyword id="KW-0687">Ribonucleoprotein</keyword>
<keyword id="KW-0689">Ribosomal protein</keyword>
<evidence type="ECO:0000255" key="1">
    <source>
        <dbReference type="HAMAP-Rule" id="MF_00374"/>
    </source>
</evidence>
<evidence type="ECO:0000305" key="2"/>
<protein>
    <recommendedName>
        <fullName evidence="1">Large ribosomal subunit protein uL29</fullName>
    </recommendedName>
    <alternativeName>
        <fullName evidence="2">50S ribosomal protein L29</fullName>
    </alternativeName>
</protein>
<proteinExistence type="inferred from homology"/>
<feature type="chain" id="PRO_1000079877" description="Large ribosomal subunit protein uL29">
    <location>
        <begin position="1"/>
        <end position="68"/>
    </location>
</feature>
<comment type="similarity">
    <text evidence="1">Belongs to the universal ribosomal protein uL29 family.</text>
</comment>
<dbReference type="EMBL" id="CP000909">
    <property type="protein sequence ID" value="ABY35586.1"/>
    <property type="molecule type" value="Genomic_DNA"/>
</dbReference>
<dbReference type="RefSeq" id="WP_012258239.1">
    <property type="nucleotide sequence ID" value="NC_010175.1"/>
</dbReference>
<dbReference type="RefSeq" id="YP_001635975.1">
    <property type="nucleotide sequence ID" value="NC_010175.1"/>
</dbReference>
<dbReference type="SMR" id="A9WH74"/>
<dbReference type="FunCoup" id="A9WH74">
    <property type="interactions" value="352"/>
</dbReference>
<dbReference type="STRING" id="324602.Caur_2377"/>
<dbReference type="EnsemblBacteria" id="ABY35586">
    <property type="protein sequence ID" value="ABY35586"/>
    <property type="gene ID" value="Caur_2377"/>
</dbReference>
<dbReference type="KEGG" id="cau:Caur_2377"/>
<dbReference type="PATRIC" id="fig|324602.8.peg.2691"/>
<dbReference type="eggNOG" id="COG0255">
    <property type="taxonomic scope" value="Bacteria"/>
</dbReference>
<dbReference type="HOGENOM" id="CLU_158491_3_3_0"/>
<dbReference type="InParanoid" id="A9WH74"/>
<dbReference type="Proteomes" id="UP000002008">
    <property type="component" value="Chromosome"/>
</dbReference>
<dbReference type="GO" id="GO:0022625">
    <property type="term" value="C:cytosolic large ribosomal subunit"/>
    <property type="evidence" value="ECO:0000318"/>
    <property type="project" value="GO_Central"/>
</dbReference>
<dbReference type="GO" id="GO:0003735">
    <property type="term" value="F:structural constituent of ribosome"/>
    <property type="evidence" value="ECO:0007669"/>
    <property type="project" value="InterPro"/>
</dbReference>
<dbReference type="GO" id="GO:0006412">
    <property type="term" value="P:translation"/>
    <property type="evidence" value="ECO:0007669"/>
    <property type="project" value="UniProtKB-UniRule"/>
</dbReference>
<dbReference type="CDD" id="cd00427">
    <property type="entry name" value="Ribosomal_L29_HIP"/>
    <property type="match status" value="1"/>
</dbReference>
<dbReference type="FunFam" id="1.10.287.310:FF:000001">
    <property type="entry name" value="50S ribosomal protein L29"/>
    <property type="match status" value="1"/>
</dbReference>
<dbReference type="Gene3D" id="1.10.287.310">
    <property type="match status" value="1"/>
</dbReference>
<dbReference type="HAMAP" id="MF_00374">
    <property type="entry name" value="Ribosomal_uL29"/>
    <property type="match status" value="1"/>
</dbReference>
<dbReference type="InterPro" id="IPR050063">
    <property type="entry name" value="Ribosomal_protein_uL29"/>
</dbReference>
<dbReference type="InterPro" id="IPR001854">
    <property type="entry name" value="Ribosomal_uL29"/>
</dbReference>
<dbReference type="InterPro" id="IPR036049">
    <property type="entry name" value="Ribosomal_uL29_sf"/>
</dbReference>
<dbReference type="NCBIfam" id="TIGR00012">
    <property type="entry name" value="L29"/>
    <property type="match status" value="1"/>
</dbReference>
<dbReference type="PANTHER" id="PTHR10916">
    <property type="entry name" value="60S RIBOSOMAL PROTEIN L35/50S RIBOSOMAL PROTEIN L29"/>
    <property type="match status" value="1"/>
</dbReference>
<dbReference type="PANTHER" id="PTHR10916:SF0">
    <property type="entry name" value="LARGE RIBOSOMAL SUBUNIT PROTEIN UL29C"/>
    <property type="match status" value="1"/>
</dbReference>
<dbReference type="Pfam" id="PF00831">
    <property type="entry name" value="Ribosomal_L29"/>
    <property type="match status" value="1"/>
</dbReference>
<dbReference type="SUPFAM" id="SSF46561">
    <property type="entry name" value="Ribosomal protein L29 (L29p)"/>
    <property type="match status" value="1"/>
</dbReference>
<gene>
    <name evidence="1" type="primary">rpmC</name>
    <name type="ordered locus">Caur_2377</name>
</gene>
<accession>A9WH74</accession>
<sequence>MKANELRALDDAQLREKLAEYKVELFNLRFQKATGKLTNTARPRLVKKEIARILTILRERELAQAELG</sequence>
<organism>
    <name type="scientific">Chloroflexus aurantiacus (strain ATCC 29366 / DSM 635 / J-10-fl)</name>
    <dbReference type="NCBI Taxonomy" id="324602"/>
    <lineage>
        <taxon>Bacteria</taxon>
        <taxon>Bacillati</taxon>
        <taxon>Chloroflexota</taxon>
        <taxon>Chloroflexia</taxon>
        <taxon>Chloroflexales</taxon>
        <taxon>Chloroflexineae</taxon>
        <taxon>Chloroflexaceae</taxon>
        <taxon>Chloroflexus</taxon>
    </lineage>
</organism>
<name>RL29_CHLAA</name>
<reference key="1">
    <citation type="journal article" date="2011" name="BMC Genomics">
        <title>Complete genome sequence of the filamentous anoxygenic phototrophic bacterium Chloroflexus aurantiacus.</title>
        <authorList>
            <person name="Tang K.H."/>
            <person name="Barry K."/>
            <person name="Chertkov O."/>
            <person name="Dalin E."/>
            <person name="Han C.S."/>
            <person name="Hauser L.J."/>
            <person name="Honchak B.M."/>
            <person name="Karbach L.E."/>
            <person name="Land M.L."/>
            <person name="Lapidus A."/>
            <person name="Larimer F.W."/>
            <person name="Mikhailova N."/>
            <person name="Pitluck S."/>
            <person name="Pierson B.K."/>
            <person name="Blankenship R.E."/>
        </authorList>
    </citation>
    <scope>NUCLEOTIDE SEQUENCE [LARGE SCALE GENOMIC DNA]</scope>
    <source>
        <strain>ATCC 29366 / DSM 635 / J-10-fl</strain>
    </source>
</reference>